<reference key="1">
    <citation type="journal article" date="2000" name="Nature">
        <title>The genome sequence of the food-borne pathogen Campylobacter jejuni reveals hypervariable sequences.</title>
        <authorList>
            <person name="Parkhill J."/>
            <person name="Wren B.W."/>
            <person name="Mungall K.L."/>
            <person name="Ketley J.M."/>
            <person name="Churcher C.M."/>
            <person name="Basham D."/>
            <person name="Chillingworth T."/>
            <person name="Davies R.M."/>
            <person name="Feltwell T."/>
            <person name="Holroyd S."/>
            <person name="Jagels K."/>
            <person name="Karlyshev A.V."/>
            <person name="Moule S."/>
            <person name="Pallen M.J."/>
            <person name="Penn C.W."/>
            <person name="Quail M.A."/>
            <person name="Rajandream M.A."/>
            <person name="Rutherford K.M."/>
            <person name="van Vliet A.H.M."/>
            <person name="Whitehead S."/>
            <person name="Barrell B.G."/>
        </authorList>
    </citation>
    <scope>NUCLEOTIDE SEQUENCE [LARGE SCALE GENOMIC DNA]</scope>
    <source>
        <strain>ATCC 700819 / NCTC 11168</strain>
    </source>
</reference>
<dbReference type="EC" id="2.8.1.10" evidence="1"/>
<dbReference type="EMBL" id="AL111168">
    <property type="protein sequence ID" value="CAL35163.1"/>
    <property type="molecule type" value="Genomic_DNA"/>
</dbReference>
<dbReference type="PIR" id="B81307">
    <property type="entry name" value="B81307"/>
</dbReference>
<dbReference type="RefSeq" id="WP_010891902.1">
    <property type="nucleotide sequence ID" value="NZ_SZUC01000001.1"/>
</dbReference>
<dbReference type="RefSeq" id="YP_002344440.1">
    <property type="nucleotide sequence ID" value="NC_002163.1"/>
</dbReference>
<dbReference type="SMR" id="Q9PNP6"/>
<dbReference type="IntAct" id="Q9PNP6">
    <property type="interactions" value="1"/>
</dbReference>
<dbReference type="STRING" id="192222.Cj1045c"/>
<dbReference type="PaxDb" id="192222-Cj1045c"/>
<dbReference type="EnsemblBacteria" id="CAL35163">
    <property type="protein sequence ID" value="CAL35163"/>
    <property type="gene ID" value="Cj1045c"/>
</dbReference>
<dbReference type="GeneID" id="905337"/>
<dbReference type="KEGG" id="cje:Cj1045c"/>
<dbReference type="PATRIC" id="fig|192222.6.peg.1027"/>
<dbReference type="eggNOG" id="COG2022">
    <property type="taxonomic scope" value="Bacteria"/>
</dbReference>
<dbReference type="HOGENOM" id="CLU_062233_1_0_7"/>
<dbReference type="OrthoDB" id="9805935at2"/>
<dbReference type="UniPathway" id="UPA00060"/>
<dbReference type="Proteomes" id="UP000000799">
    <property type="component" value="Chromosome"/>
</dbReference>
<dbReference type="GO" id="GO:0005737">
    <property type="term" value="C:cytoplasm"/>
    <property type="evidence" value="ECO:0007669"/>
    <property type="project" value="UniProtKB-SubCell"/>
</dbReference>
<dbReference type="GO" id="GO:1990107">
    <property type="term" value="F:thiazole synthase activity"/>
    <property type="evidence" value="ECO:0007669"/>
    <property type="project" value="UniProtKB-EC"/>
</dbReference>
<dbReference type="GO" id="GO:0009229">
    <property type="term" value="P:thiamine diphosphate biosynthetic process"/>
    <property type="evidence" value="ECO:0007669"/>
    <property type="project" value="UniProtKB-UniRule"/>
</dbReference>
<dbReference type="CDD" id="cd04728">
    <property type="entry name" value="ThiG"/>
    <property type="match status" value="1"/>
</dbReference>
<dbReference type="Gene3D" id="3.20.20.70">
    <property type="entry name" value="Aldolase class I"/>
    <property type="match status" value="1"/>
</dbReference>
<dbReference type="HAMAP" id="MF_00443">
    <property type="entry name" value="ThiG"/>
    <property type="match status" value="1"/>
</dbReference>
<dbReference type="InterPro" id="IPR013785">
    <property type="entry name" value="Aldolase_TIM"/>
</dbReference>
<dbReference type="InterPro" id="IPR033983">
    <property type="entry name" value="Thiazole_synthase_ThiG"/>
</dbReference>
<dbReference type="InterPro" id="IPR008867">
    <property type="entry name" value="ThiG"/>
</dbReference>
<dbReference type="PANTHER" id="PTHR34266">
    <property type="entry name" value="THIAZOLE SYNTHASE"/>
    <property type="match status" value="1"/>
</dbReference>
<dbReference type="PANTHER" id="PTHR34266:SF2">
    <property type="entry name" value="THIAZOLE SYNTHASE"/>
    <property type="match status" value="1"/>
</dbReference>
<dbReference type="Pfam" id="PF05690">
    <property type="entry name" value="ThiG"/>
    <property type="match status" value="1"/>
</dbReference>
<dbReference type="SUPFAM" id="SSF110399">
    <property type="entry name" value="ThiG-like"/>
    <property type="match status" value="1"/>
</dbReference>
<protein>
    <recommendedName>
        <fullName evidence="1">Thiazole synthase</fullName>
        <ecNumber evidence="1">2.8.1.10</ecNumber>
    </recommendedName>
</protein>
<name>THIG_CAMJE</name>
<sequence length="258" mass="27647">MQENLKNDKLKIGKYEFDSRFILGSGKYSLELIKSAIEEAKAQIITLALRRANTGEIANILDYIPKNITLLPNTSGARNADEALRIARLSRELGCGELIKIEVISDSRYLLPDNYETIKACELLAKEGFTPLPYMHADLYAARAMRDAGAAAIMPLAAPIGSNKGLCAKEFIQILLNEIDLPIIVDAGIGSPSQACEAMQMGVSAVMVNTAIAEAKDIALMARAFSLAVNAGRVAFLAGVASVSEAKASSPLTGFLRD</sequence>
<accession>Q9PNP6</accession>
<accession>Q0P9K7</accession>
<evidence type="ECO:0000255" key="1">
    <source>
        <dbReference type="HAMAP-Rule" id="MF_00443"/>
    </source>
</evidence>
<proteinExistence type="inferred from homology"/>
<comment type="function">
    <text evidence="1">Catalyzes the rearrangement of 1-deoxy-D-xylulose 5-phosphate (DXP) to produce the thiazole phosphate moiety of thiamine. Sulfur is provided by the thiocarboxylate moiety of the carrier protein ThiS. In vitro, sulfur can be provided by H(2)S.</text>
</comment>
<comment type="catalytic activity">
    <reaction evidence="1">
        <text>[ThiS sulfur-carrier protein]-C-terminal-Gly-aminoethanethioate + 2-iminoacetate + 1-deoxy-D-xylulose 5-phosphate = [ThiS sulfur-carrier protein]-C-terminal Gly-Gly + 2-[(2R,5Z)-2-carboxy-4-methylthiazol-5(2H)-ylidene]ethyl phosphate + 2 H2O + H(+)</text>
        <dbReference type="Rhea" id="RHEA:26297"/>
        <dbReference type="Rhea" id="RHEA-COMP:12909"/>
        <dbReference type="Rhea" id="RHEA-COMP:19908"/>
        <dbReference type="ChEBI" id="CHEBI:15377"/>
        <dbReference type="ChEBI" id="CHEBI:15378"/>
        <dbReference type="ChEBI" id="CHEBI:57792"/>
        <dbReference type="ChEBI" id="CHEBI:62899"/>
        <dbReference type="ChEBI" id="CHEBI:77846"/>
        <dbReference type="ChEBI" id="CHEBI:90778"/>
        <dbReference type="ChEBI" id="CHEBI:232372"/>
        <dbReference type="EC" id="2.8.1.10"/>
    </reaction>
</comment>
<comment type="pathway">
    <text evidence="1">Cofactor biosynthesis; thiamine diphosphate biosynthesis.</text>
</comment>
<comment type="subunit">
    <text evidence="1">Homotetramer. Forms heterodimers with either ThiH or ThiS.</text>
</comment>
<comment type="subcellular location">
    <subcellularLocation>
        <location evidence="1">Cytoplasm</location>
    </subcellularLocation>
</comment>
<comment type="similarity">
    <text evidence="1">Belongs to the ThiG family.</text>
</comment>
<gene>
    <name evidence="1" type="primary">thiG</name>
    <name type="ordered locus">Cj1045c</name>
</gene>
<organism>
    <name type="scientific">Campylobacter jejuni subsp. jejuni serotype O:2 (strain ATCC 700819 / NCTC 11168)</name>
    <dbReference type="NCBI Taxonomy" id="192222"/>
    <lineage>
        <taxon>Bacteria</taxon>
        <taxon>Pseudomonadati</taxon>
        <taxon>Campylobacterota</taxon>
        <taxon>Epsilonproteobacteria</taxon>
        <taxon>Campylobacterales</taxon>
        <taxon>Campylobacteraceae</taxon>
        <taxon>Campylobacter</taxon>
    </lineage>
</organism>
<feature type="chain" id="PRO_0000162801" description="Thiazole synthase">
    <location>
        <begin position="1"/>
        <end position="258"/>
    </location>
</feature>
<feature type="active site" description="Schiff-base intermediate with DXP" evidence="1">
    <location>
        <position position="100"/>
    </location>
</feature>
<feature type="binding site" evidence="1">
    <location>
        <position position="161"/>
    </location>
    <ligand>
        <name>1-deoxy-D-xylulose 5-phosphate</name>
        <dbReference type="ChEBI" id="CHEBI:57792"/>
    </ligand>
</feature>
<feature type="binding site" evidence="1">
    <location>
        <begin position="187"/>
        <end position="188"/>
    </location>
    <ligand>
        <name>1-deoxy-D-xylulose 5-phosphate</name>
        <dbReference type="ChEBI" id="CHEBI:57792"/>
    </ligand>
</feature>
<feature type="binding site" evidence="1">
    <location>
        <begin position="209"/>
        <end position="210"/>
    </location>
    <ligand>
        <name>1-deoxy-D-xylulose 5-phosphate</name>
        <dbReference type="ChEBI" id="CHEBI:57792"/>
    </ligand>
</feature>
<keyword id="KW-0963">Cytoplasm</keyword>
<keyword id="KW-1185">Reference proteome</keyword>
<keyword id="KW-0704">Schiff base</keyword>
<keyword id="KW-0784">Thiamine biosynthesis</keyword>
<keyword id="KW-0808">Transferase</keyword>